<organism>
    <name type="scientific">Escherichia coli O157:H7</name>
    <dbReference type="NCBI Taxonomy" id="83334"/>
    <lineage>
        <taxon>Bacteria</taxon>
        <taxon>Pseudomonadati</taxon>
        <taxon>Pseudomonadota</taxon>
        <taxon>Gammaproteobacteria</taxon>
        <taxon>Enterobacterales</taxon>
        <taxon>Enterobacteriaceae</taxon>
        <taxon>Escherichia</taxon>
    </lineage>
</organism>
<evidence type="ECO:0000250" key="1"/>
<evidence type="ECO:0000255" key="2"/>
<evidence type="ECO:0000305" key="3"/>
<comment type="function">
    <text evidence="1">Probably has no xanthine dehydrogenase activity; however deletion results in increased adenine sensitivity, suggesting that this protein contributes to the conversion of adenine to guanine nucleotides during purine salvage.</text>
</comment>
<comment type="cofactor">
    <cofactor evidence="3">
        <name>[2Fe-2S] cluster</name>
        <dbReference type="ChEBI" id="CHEBI:190135"/>
    </cofactor>
    <text evidence="3">Binds 2 [2Fe-2S] centers.</text>
</comment>
<comment type="cofactor">
    <cofactor evidence="1">
        <name>Mo-molybdopterin</name>
        <dbReference type="ChEBI" id="CHEBI:71302"/>
    </cofactor>
    <text evidence="1">Binds 1 Mo-molybdopterin (Mo-MPT) cofactor per subunit.</text>
</comment>
<comment type="similarity">
    <text evidence="3">Belongs to the xanthine dehydrogenase family.</text>
</comment>
<keyword id="KW-0001">2Fe-2S</keyword>
<keyword id="KW-0408">Iron</keyword>
<keyword id="KW-0411">Iron-sulfur</keyword>
<keyword id="KW-0479">Metal-binding</keyword>
<keyword id="KW-0500">Molybdenum</keyword>
<keyword id="KW-0560">Oxidoreductase</keyword>
<keyword id="KW-0659">Purine metabolism</keyword>
<keyword id="KW-0660">Purine salvage</keyword>
<keyword id="KW-1185">Reference proteome</keyword>
<proteinExistence type="inferred from homology"/>
<accession>Q8XD64</accession>
<reference key="1">
    <citation type="journal article" date="2001" name="Nature">
        <title>Genome sequence of enterohaemorrhagic Escherichia coli O157:H7.</title>
        <authorList>
            <person name="Perna N.T."/>
            <person name="Plunkett G. III"/>
            <person name="Burland V."/>
            <person name="Mau B."/>
            <person name="Glasner J.D."/>
            <person name="Rose D.J."/>
            <person name="Mayhew G.F."/>
            <person name="Evans P.S."/>
            <person name="Gregor J."/>
            <person name="Kirkpatrick H.A."/>
            <person name="Posfai G."/>
            <person name="Hackett J."/>
            <person name="Klink S."/>
            <person name="Boutin A."/>
            <person name="Shao Y."/>
            <person name="Miller L."/>
            <person name="Grotbeck E.J."/>
            <person name="Davis N.W."/>
            <person name="Lim A."/>
            <person name="Dimalanta E.T."/>
            <person name="Potamousis K."/>
            <person name="Apodaca J."/>
            <person name="Anantharaman T.S."/>
            <person name="Lin J."/>
            <person name="Yen G."/>
            <person name="Schwartz D.C."/>
            <person name="Welch R.A."/>
            <person name="Blattner F.R."/>
        </authorList>
    </citation>
    <scope>NUCLEOTIDE SEQUENCE [LARGE SCALE GENOMIC DNA]</scope>
    <source>
        <strain>O157:H7 / EDL933 / ATCC 700927 / EHEC</strain>
    </source>
</reference>
<reference key="2">
    <citation type="journal article" date="2001" name="DNA Res.">
        <title>Complete genome sequence of enterohemorrhagic Escherichia coli O157:H7 and genomic comparison with a laboratory strain K-12.</title>
        <authorList>
            <person name="Hayashi T."/>
            <person name="Makino K."/>
            <person name="Ohnishi M."/>
            <person name="Kurokawa K."/>
            <person name="Ishii K."/>
            <person name="Yokoyama K."/>
            <person name="Han C.-G."/>
            <person name="Ohtsubo E."/>
            <person name="Nakayama K."/>
            <person name="Murata T."/>
            <person name="Tanaka M."/>
            <person name="Tobe T."/>
            <person name="Iida T."/>
            <person name="Takami H."/>
            <person name="Honda T."/>
            <person name="Sasakawa C."/>
            <person name="Ogasawara N."/>
            <person name="Yasunaga T."/>
            <person name="Kuhara S."/>
            <person name="Shiba T."/>
            <person name="Hattori M."/>
            <person name="Shinagawa H."/>
        </authorList>
    </citation>
    <scope>NUCLEOTIDE SEQUENCE [LARGE SCALE GENOMIC DNA]</scope>
    <source>
        <strain>O157:H7 / Sakai / RIMD 0509952 / EHEC</strain>
    </source>
</reference>
<sequence>MIIHFTLNGAPQELTVNPGENVQKLLFNMGMHSVRNSDDGFGFAGSDAIIFNGNIVNASLLIAAQLEKADIRTAESLGKWNELSLVQQAMVDVGVVQSGYNDPAAALIITDLLDRIAAPTREEIDDALSGLFSRDAGWQQYYQVIELAVARKNNPQATIDIAPTFRDDLEVIGKHYPKTDAAKMVQAKPCYVEDRVTADACVIKMLRSPHAHALITHLDVSKAEALPGVVHVITHLNCPDIYYTPGGQSAPEPSPLDRRMFGKKMRHVGDRVAAVVAESEEIALEALKLIEVEYEVLKPVMSIDEAMAEDAPVVHDEPVVYVAGAPDTLEDDNSHAAQRGEHMIINFPIGSRPRKNIAASIHGHIGDMDKGFADADVIIERTYNSTQAQQCPTETHICFTRMDGDRLVIHASTQVPWHLRRQVARLVDMKQHKVHVIKERVGGGFGSKQDILLEEVCAWATCVTGRPVLFRYTREEEFIANTSRHVAKVTVKLGAKKDGRLTAVKMDFRANTGPYGNHSLTVPCNGPALSLPLYPCDNVDFQVTTYYSNICPNGAYQGYGAPKGNFAITMALAELAEQLQIDQLEIIERNRVHEGQELKILGAIGEGKAPTSVPSAASCALEEILRQGREMIQWSSPKPQNGDWHIGRGVAIIMQKSGIPDIDQANCMIKLESDGTFIVHSGGADIGTGLDTVVTKLAAEVLHCPPQDVHVISGDTDHALFDKGAYASSGTCFSGNAARLAAENLREKILFHGAQMLGEPVADVQLATPGVVRGKKGEVSFGDIAHKGETGTGFGSLVGTGSYITPDFAFPYGANFAEVAVNTRTGEIRLDKFYALLDCGTPVNPELALGQIYGATLRAIGHSMSEEIIYDAEGHPLTRDLRSYGAPKIGDIPRDFRAVLVPSDDKVGPFGAKSISEIGVNGAAPAIATAIHDACGIWLREWHFTPEKILTALEKI</sequence>
<feature type="chain" id="PRO_0000166097" description="Probable hypoxanthine oxidase XdhD">
    <location>
        <begin position="1"/>
        <end position="956"/>
    </location>
</feature>
<feature type="binding site" evidence="2">
    <location>
        <position position="414"/>
    </location>
    <ligand>
        <name>Mo-molybdopterin</name>
        <dbReference type="ChEBI" id="CHEBI:71302"/>
    </ligand>
    <ligandPart>
        <name>Mo</name>
        <dbReference type="ChEBI" id="CHEBI:28685"/>
    </ligandPart>
</feature>
<feature type="binding site" evidence="2">
    <location>
        <position position="445"/>
    </location>
    <ligand>
        <name>Mo-molybdopterin</name>
        <dbReference type="ChEBI" id="CHEBI:71302"/>
    </ligand>
    <ligandPart>
        <name>Mo</name>
        <dbReference type="ChEBI" id="CHEBI:28685"/>
    </ligandPart>
</feature>
<feature type="binding site" evidence="2">
    <location>
        <position position="727"/>
    </location>
    <ligand>
        <name>Mo-molybdopterin</name>
        <dbReference type="ChEBI" id="CHEBI:71302"/>
    </ligand>
    <ligandPart>
        <name>Mo</name>
        <dbReference type="ChEBI" id="CHEBI:28685"/>
    </ligandPart>
</feature>
<gene>
    <name type="primary">xdhD</name>
    <name type="ordered locus">Z4220</name>
    <name type="ordered locus">ECs3754</name>
</gene>
<dbReference type="EC" id="1.-.-.-"/>
<dbReference type="EMBL" id="AE005174">
    <property type="protein sequence ID" value="AAG58010.1"/>
    <property type="molecule type" value="Genomic_DNA"/>
</dbReference>
<dbReference type="EMBL" id="BA000007">
    <property type="protein sequence ID" value="BAB37177.1"/>
    <property type="molecule type" value="Genomic_DNA"/>
</dbReference>
<dbReference type="PIR" id="B91098">
    <property type="entry name" value="B91098"/>
</dbReference>
<dbReference type="PIR" id="F85943">
    <property type="entry name" value="F85943"/>
</dbReference>
<dbReference type="RefSeq" id="NP_311781.1">
    <property type="nucleotide sequence ID" value="NC_002695.1"/>
</dbReference>
<dbReference type="RefSeq" id="WP_000583635.1">
    <property type="nucleotide sequence ID" value="NZ_VOAI01000003.1"/>
</dbReference>
<dbReference type="SMR" id="Q8XD64"/>
<dbReference type="STRING" id="155864.Z4220"/>
<dbReference type="GeneID" id="916428"/>
<dbReference type="KEGG" id="ece:Z4220"/>
<dbReference type="KEGG" id="ecs:ECs_3754"/>
<dbReference type="PATRIC" id="fig|386585.9.peg.3916"/>
<dbReference type="eggNOG" id="COG1529">
    <property type="taxonomic scope" value="Bacteria"/>
</dbReference>
<dbReference type="eggNOG" id="COG2080">
    <property type="taxonomic scope" value="Bacteria"/>
</dbReference>
<dbReference type="HOGENOM" id="CLU_001681_2_3_6"/>
<dbReference type="OMA" id="THYYQTV"/>
<dbReference type="Proteomes" id="UP000000558">
    <property type="component" value="Chromosome"/>
</dbReference>
<dbReference type="Proteomes" id="UP000002519">
    <property type="component" value="Chromosome"/>
</dbReference>
<dbReference type="GO" id="GO:0051537">
    <property type="term" value="F:2 iron, 2 sulfur cluster binding"/>
    <property type="evidence" value="ECO:0007669"/>
    <property type="project" value="UniProtKB-KW"/>
</dbReference>
<dbReference type="GO" id="GO:0005506">
    <property type="term" value="F:iron ion binding"/>
    <property type="evidence" value="ECO:0007669"/>
    <property type="project" value="InterPro"/>
</dbReference>
<dbReference type="GO" id="GO:0016491">
    <property type="term" value="F:oxidoreductase activity"/>
    <property type="evidence" value="ECO:0007669"/>
    <property type="project" value="UniProtKB-KW"/>
</dbReference>
<dbReference type="GO" id="GO:0006144">
    <property type="term" value="P:purine nucleobase metabolic process"/>
    <property type="evidence" value="ECO:0007669"/>
    <property type="project" value="UniProtKB-KW"/>
</dbReference>
<dbReference type="GO" id="GO:0006166">
    <property type="term" value="P:purine ribonucleoside salvage"/>
    <property type="evidence" value="ECO:0007669"/>
    <property type="project" value="UniProtKB-KW"/>
</dbReference>
<dbReference type="FunFam" id="3.90.1170.50:FF:000004">
    <property type="entry name" value="Selenate reductase subunit YgfN"/>
    <property type="match status" value="1"/>
</dbReference>
<dbReference type="Gene3D" id="1.10.150.120">
    <property type="entry name" value="[2Fe-2S]-binding domain"/>
    <property type="match status" value="1"/>
</dbReference>
<dbReference type="Gene3D" id="3.90.1170.50">
    <property type="entry name" value="Aldehyde oxidase/xanthine dehydrogenase, a/b hammerhead"/>
    <property type="match status" value="1"/>
</dbReference>
<dbReference type="Gene3D" id="3.30.365.10">
    <property type="entry name" value="Aldehyde oxidase/xanthine dehydrogenase, molybdopterin binding domain"/>
    <property type="match status" value="4"/>
</dbReference>
<dbReference type="InterPro" id="IPR002888">
    <property type="entry name" value="2Fe-2S-bd"/>
</dbReference>
<dbReference type="InterPro" id="IPR036884">
    <property type="entry name" value="2Fe-2S-bd_dom_sf"/>
</dbReference>
<dbReference type="InterPro" id="IPR000674">
    <property type="entry name" value="Ald_Oxase/Xan_DH_a/b"/>
</dbReference>
<dbReference type="InterPro" id="IPR036856">
    <property type="entry name" value="Ald_Oxase/Xan_DH_a/b_sf"/>
</dbReference>
<dbReference type="InterPro" id="IPR016208">
    <property type="entry name" value="Ald_Oxase/xanthine_DH-like"/>
</dbReference>
<dbReference type="InterPro" id="IPR008274">
    <property type="entry name" value="AldOxase/xan_DH_MoCoBD1"/>
</dbReference>
<dbReference type="InterPro" id="IPR046867">
    <property type="entry name" value="AldOxase/xan_DH_MoCoBD2"/>
</dbReference>
<dbReference type="InterPro" id="IPR037165">
    <property type="entry name" value="AldOxase/xan_DH_Mopterin-bd_sf"/>
</dbReference>
<dbReference type="InterPro" id="IPR017699">
    <property type="entry name" value="Mo-bd_YgfN/XdhD"/>
</dbReference>
<dbReference type="NCBIfam" id="TIGR03313">
    <property type="entry name" value="Se_sel_red_Mo"/>
    <property type="match status" value="1"/>
</dbReference>
<dbReference type="PANTHER" id="PTHR11908:SF132">
    <property type="entry name" value="ALDEHYDE OXIDASE 1-RELATED"/>
    <property type="match status" value="1"/>
</dbReference>
<dbReference type="PANTHER" id="PTHR11908">
    <property type="entry name" value="XANTHINE DEHYDROGENASE"/>
    <property type="match status" value="1"/>
</dbReference>
<dbReference type="Pfam" id="PF01315">
    <property type="entry name" value="Ald_Xan_dh_C"/>
    <property type="match status" value="1"/>
</dbReference>
<dbReference type="Pfam" id="PF01799">
    <property type="entry name" value="Fer2_2"/>
    <property type="match status" value="1"/>
</dbReference>
<dbReference type="Pfam" id="PF02738">
    <property type="entry name" value="MoCoBD_1"/>
    <property type="match status" value="1"/>
</dbReference>
<dbReference type="Pfam" id="PF20256">
    <property type="entry name" value="MoCoBD_2"/>
    <property type="match status" value="1"/>
</dbReference>
<dbReference type="PIRSF" id="PIRSF000127">
    <property type="entry name" value="Xanthine_DH"/>
    <property type="match status" value="1"/>
</dbReference>
<dbReference type="SMART" id="SM01008">
    <property type="entry name" value="Ald_Xan_dh_C"/>
    <property type="match status" value="1"/>
</dbReference>
<dbReference type="SUPFAM" id="SSF47741">
    <property type="entry name" value="CO dehydrogenase ISP C-domain like"/>
    <property type="match status" value="1"/>
</dbReference>
<dbReference type="SUPFAM" id="SSF54665">
    <property type="entry name" value="CO dehydrogenase molybdoprotein N-domain-like"/>
    <property type="match status" value="1"/>
</dbReference>
<dbReference type="SUPFAM" id="SSF56003">
    <property type="entry name" value="Molybdenum cofactor-binding domain"/>
    <property type="match status" value="1"/>
</dbReference>
<name>XDHD_ECO57</name>
<protein>
    <recommendedName>
        <fullName>Probable hypoxanthine oxidase XdhD</fullName>
        <ecNumber>1.-.-.-</ecNumber>
    </recommendedName>
</protein>